<comment type="function">
    <text evidence="1">Mediates the interaction of DNA replication initiator protein DnaA with DNA polymerase subunit beta sliding clamp (dnaN). Stimulates hydrolysis of ATP-DnaA to ADP-DnaA, rendering DnaA inactive for reinitiation, a process called regulatory inhibition of DnaA or RIDA (By similarity).</text>
</comment>
<comment type="subunit">
    <text evidence="2">The active form seems to be an ADP-bound monomer. Forms the RIDA complex (regulatory inactivation of DnaA) of ATP-DnaA, ADP-Hda and the DNA-loaded beta sliding clamp (dnaN).</text>
</comment>
<comment type="similarity">
    <text evidence="2">Belongs to the DnaA family. HdA subfamily.</text>
</comment>
<comment type="sequence caution" evidence="3">
    <conflict type="erroneous initiation">
        <sequence resource="EMBL-CDS" id="ABB67062"/>
    </conflict>
</comment>
<feature type="chain" id="PRO_1000065566" description="DnaA regulatory inactivator Hda">
    <location>
        <begin position="1"/>
        <end position="233"/>
    </location>
</feature>
<sequence length="233" mass="26633">MNTPAQLSLPLYLPDDETFASFWPGDNSSLLAALQNVLRQEHSGYIYLWAREGAGRSHLLHAACAELSQRGDAVGYVPLDKRTWFVPEVLDGMEHLSLVCIDNIECIAGDELWEMAIFDLYNRILESGKTRLLITGDRPPRQLNLGLPDLASRLDWGQIYKLQPLSDEDKLQALQLRARLRGFELPEDVGRFLLKRLDREMRTLFMTLDQLDRASITAQRKLTIPFVKEILKL</sequence>
<protein>
    <recommendedName>
        <fullName evidence="2">DnaA regulatory inactivator Hda</fullName>
    </recommendedName>
</protein>
<gene>
    <name evidence="2" type="primary">hda</name>
    <name type="ordered locus">SBO_2517</name>
</gene>
<evidence type="ECO:0000250" key="1"/>
<evidence type="ECO:0000255" key="2">
    <source>
        <dbReference type="HAMAP-Rule" id="MF_01158"/>
    </source>
</evidence>
<evidence type="ECO:0000305" key="3"/>
<name>HDA_SHIBS</name>
<dbReference type="EMBL" id="CP000036">
    <property type="protein sequence ID" value="ABB67062.1"/>
    <property type="status" value="ALT_INIT"/>
    <property type="molecule type" value="Genomic_DNA"/>
</dbReference>
<dbReference type="RefSeq" id="WP_001307333.1">
    <property type="nucleotide sequence ID" value="NC_007613.1"/>
</dbReference>
<dbReference type="SMR" id="Q31XZ6"/>
<dbReference type="KEGG" id="sbo:SBO_2517"/>
<dbReference type="HOGENOM" id="CLU_072265_1_1_6"/>
<dbReference type="Proteomes" id="UP000007067">
    <property type="component" value="Chromosome"/>
</dbReference>
<dbReference type="GO" id="GO:0006270">
    <property type="term" value="P:DNA replication initiation"/>
    <property type="evidence" value="ECO:0007669"/>
    <property type="project" value="TreeGrafter"/>
</dbReference>
<dbReference type="GO" id="GO:0032297">
    <property type="term" value="P:negative regulation of DNA-templated DNA replication initiation"/>
    <property type="evidence" value="ECO:0007669"/>
    <property type="project" value="InterPro"/>
</dbReference>
<dbReference type="FunFam" id="1.10.8.60:FF:000024">
    <property type="entry name" value="DnaA regulatory inactivator Hda"/>
    <property type="match status" value="1"/>
</dbReference>
<dbReference type="FunFam" id="3.40.50.300:FF:000452">
    <property type="entry name" value="DnaA regulatory inactivator Hda"/>
    <property type="match status" value="1"/>
</dbReference>
<dbReference type="Gene3D" id="1.10.8.60">
    <property type="match status" value="1"/>
</dbReference>
<dbReference type="Gene3D" id="3.40.50.300">
    <property type="entry name" value="P-loop containing nucleotide triphosphate hydrolases"/>
    <property type="match status" value="1"/>
</dbReference>
<dbReference type="HAMAP" id="MF_01158">
    <property type="entry name" value="Hda"/>
    <property type="match status" value="1"/>
</dbReference>
<dbReference type="InterPro" id="IPR020591">
    <property type="entry name" value="Chromosome_initiator_DnaA-like"/>
</dbReference>
<dbReference type="InterPro" id="IPR013317">
    <property type="entry name" value="DnaA_dom"/>
</dbReference>
<dbReference type="InterPro" id="IPR017788">
    <property type="entry name" value="Hda"/>
</dbReference>
<dbReference type="InterPro" id="IPR022864">
    <property type="entry name" value="Hda_Enterobact"/>
</dbReference>
<dbReference type="InterPro" id="IPR055199">
    <property type="entry name" value="Hda_lid"/>
</dbReference>
<dbReference type="InterPro" id="IPR027417">
    <property type="entry name" value="P-loop_NTPase"/>
</dbReference>
<dbReference type="NCBIfam" id="TIGR03420">
    <property type="entry name" value="DnaA_homol_Hda"/>
    <property type="match status" value="1"/>
</dbReference>
<dbReference type="NCBIfam" id="NF005982">
    <property type="entry name" value="PRK08084.1"/>
    <property type="match status" value="1"/>
</dbReference>
<dbReference type="PANTHER" id="PTHR30050">
    <property type="entry name" value="CHROMOSOMAL REPLICATION INITIATOR PROTEIN DNAA"/>
    <property type="match status" value="1"/>
</dbReference>
<dbReference type="PANTHER" id="PTHR30050:SF5">
    <property type="entry name" value="DNAA REGULATORY INACTIVATOR HDA"/>
    <property type="match status" value="1"/>
</dbReference>
<dbReference type="Pfam" id="PF00308">
    <property type="entry name" value="Bac_DnaA"/>
    <property type="match status" value="1"/>
</dbReference>
<dbReference type="Pfam" id="PF22688">
    <property type="entry name" value="Hda_lid"/>
    <property type="match status" value="1"/>
</dbReference>
<dbReference type="PRINTS" id="PR00051">
    <property type="entry name" value="DNAA"/>
</dbReference>
<dbReference type="SUPFAM" id="SSF52540">
    <property type="entry name" value="P-loop containing nucleoside triphosphate hydrolases"/>
    <property type="match status" value="1"/>
</dbReference>
<proteinExistence type="inferred from homology"/>
<reference key="1">
    <citation type="journal article" date="2005" name="Nucleic Acids Res.">
        <title>Genome dynamics and diversity of Shigella species, the etiologic agents of bacillary dysentery.</title>
        <authorList>
            <person name="Yang F."/>
            <person name="Yang J."/>
            <person name="Zhang X."/>
            <person name="Chen L."/>
            <person name="Jiang Y."/>
            <person name="Yan Y."/>
            <person name="Tang X."/>
            <person name="Wang J."/>
            <person name="Xiong Z."/>
            <person name="Dong J."/>
            <person name="Xue Y."/>
            <person name="Zhu Y."/>
            <person name="Xu X."/>
            <person name="Sun L."/>
            <person name="Chen S."/>
            <person name="Nie H."/>
            <person name="Peng J."/>
            <person name="Xu J."/>
            <person name="Wang Y."/>
            <person name="Yuan Z."/>
            <person name="Wen Y."/>
            <person name="Yao Z."/>
            <person name="Shen Y."/>
            <person name="Qiang B."/>
            <person name="Hou Y."/>
            <person name="Yu J."/>
            <person name="Jin Q."/>
        </authorList>
    </citation>
    <scope>NUCLEOTIDE SEQUENCE [LARGE SCALE GENOMIC DNA]</scope>
    <source>
        <strain>Sb227</strain>
    </source>
</reference>
<keyword id="KW-0235">DNA replication</keyword>
<keyword id="KW-0236">DNA replication inhibitor</keyword>
<accession>Q31XZ6</accession>
<organism>
    <name type="scientific">Shigella boydii serotype 4 (strain Sb227)</name>
    <dbReference type="NCBI Taxonomy" id="300268"/>
    <lineage>
        <taxon>Bacteria</taxon>
        <taxon>Pseudomonadati</taxon>
        <taxon>Pseudomonadota</taxon>
        <taxon>Gammaproteobacteria</taxon>
        <taxon>Enterobacterales</taxon>
        <taxon>Enterobacteriaceae</taxon>
        <taxon>Shigella</taxon>
    </lineage>
</organism>